<keyword id="KW-0217">Developmental protein</keyword>
<keyword id="KW-0221">Differentiation</keyword>
<keyword id="KW-0597">Phosphoprotein</keyword>
<keyword id="KW-1185">Reference proteome</keyword>
<keyword id="KW-0744">Spermatogenesis</keyword>
<organism>
    <name type="scientific">Rattus norvegicus</name>
    <name type="common">Rat</name>
    <dbReference type="NCBI Taxonomy" id="10116"/>
    <lineage>
        <taxon>Eukaryota</taxon>
        <taxon>Metazoa</taxon>
        <taxon>Chordata</taxon>
        <taxon>Craniata</taxon>
        <taxon>Vertebrata</taxon>
        <taxon>Euteleostomi</taxon>
        <taxon>Mammalia</taxon>
        <taxon>Eutheria</taxon>
        <taxon>Euarchontoglires</taxon>
        <taxon>Glires</taxon>
        <taxon>Rodentia</taxon>
        <taxon>Myomorpha</taxon>
        <taxon>Muroidea</taxon>
        <taxon>Muridae</taxon>
        <taxon>Murinae</taxon>
        <taxon>Rattus</taxon>
    </lineage>
</organism>
<proteinExistence type="evidence at protein level"/>
<sequence length="658" mass="67501">MGNVQSEPSAGGGSRKEQASDRASDSRRTPLVEPEVTPSSPAMRLARGLGVWFPGSSGPPGLLIPPESQASSSTLPLTLELPSPVTPPPEEAAAAAVSTPPPPPVGTLLPAPSKWRKPTGTAVPRIRGLLEASHRGQGDPPSLRPLPPLPRQLTEKDPVLRAPAPPPTPLEPRKQLPPAPSTCDPQPPSRRITLASSATSPTESQVRHSSEGQAAGGAHGEGEMARSATSESGLSLLCKVTFKSGPHLSPTSSSGPLAAKASLGASGGGGLFASSGAISYAEVLKQGPQPPGATRPLGEGPRAAQETEGGDGDGEGCSGPPSVPTPLARALPPPPYTTFPGSKPKFDWVSPPDGTERHFRFNGAVGGIGAPRRRTTTLSGPWGSPPPRSGQTHPSSGPRRPTPALLAPPMFIFPAPNNGEPVRPVPPSPQQIPPLPPPPPTPPATPPPAPPPTPQPPALPRTPILVARPPTPGPGHLESALAPTPPSTLSPTAAAEQAPAPTPAPVTSQVPATTTAELSPPMPQPKIRTRRNKGPRAARGVIREEGTSGDGPREPNMAPVTDSSSGGGGGGSNGTSTAGASNKGTARHWPPFEVLNSCPCKCYCRHQRRHRRLPRNVSAWLSTPTNHLSEPPWVATVKLAGSLVAGLEHYDLQATHST</sequence>
<evidence type="ECO:0000250" key="1"/>
<evidence type="ECO:0000256" key="2">
    <source>
        <dbReference type="SAM" id="MobiDB-lite"/>
    </source>
</evidence>
<evidence type="ECO:0007744" key="3">
    <source>
    </source>
</evidence>
<comment type="function">
    <text evidence="1">May be involved in spermatogenesis.</text>
</comment>
<comment type="subunit">
    <text evidence="1">Interacts with FANCL, GGNBP1 and ZNF403/GGNBP2.</text>
</comment>
<dbReference type="EMBL" id="BC081922">
    <property type="protein sequence ID" value="AAH81922.1"/>
    <property type="molecule type" value="mRNA"/>
</dbReference>
<dbReference type="EMBL" id="BC100147">
    <property type="protein sequence ID" value="AAI00148.1"/>
    <property type="molecule type" value="mRNA"/>
</dbReference>
<dbReference type="RefSeq" id="NP_001013083.2">
    <property type="nucleotide sequence ID" value="NM_001013065.1"/>
</dbReference>
<dbReference type="RefSeq" id="NP_001296756.1">
    <property type="nucleotide sequence ID" value="NM_001309827.1"/>
</dbReference>
<dbReference type="RefSeq" id="XP_006228781.1">
    <property type="nucleotide sequence ID" value="XM_006228719.5"/>
</dbReference>
<dbReference type="FunCoup" id="Q66HC8">
    <property type="interactions" value="170"/>
</dbReference>
<dbReference type="STRING" id="10116.ENSRNOP00000053791"/>
<dbReference type="GlyGen" id="Q66HC8">
    <property type="glycosylation" value="10 sites"/>
</dbReference>
<dbReference type="iPTMnet" id="Q66HC8"/>
<dbReference type="PhosphoSitePlus" id="Q66HC8"/>
<dbReference type="PaxDb" id="10116-ENSRNOP00000053791"/>
<dbReference type="GeneID" id="292765"/>
<dbReference type="KEGG" id="rno:292765"/>
<dbReference type="UCSC" id="RGD:1306765">
    <property type="organism name" value="rat"/>
</dbReference>
<dbReference type="AGR" id="RGD:1306765"/>
<dbReference type="CTD" id="199720"/>
<dbReference type="RGD" id="1306765">
    <property type="gene designation" value="Ggn"/>
</dbReference>
<dbReference type="VEuPathDB" id="HostDB:ENSRNOG00000023931"/>
<dbReference type="eggNOG" id="ENOG502ST22">
    <property type="taxonomic scope" value="Eukaryota"/>
</dbReference>
<dbReference type="HOGENOM" id="CLU_031676_0_0_1"/>
<dbReference type="InParanoid" id="Q66HC8"/>
<dbReference type="OrthoDB" id="9424365at2759"/>
<dbReference type="PhylomeDB" id="Q66HC8"/>
<dbReference type="PRO" id="PR:Q66HC8"/>
<dbReference type="Proteomes" id="UP000002494">
    <property type="component" value="Chromosome 1"/>
</dbReference>
<dbReference type="Bgee" id="ENSRNOG00000023931">
    <property type="expression patterns" value="Expressed in testis and 17 other cell types or tissues"/>
</dbReference>
<dbReference type="GO" id="GO:0048471">
    <property type="term" value="C:perinuclear region of cytoplasm"/>
    <property type="evidence" value="ECO:0000266"/>
    <property type="project" value="RGD"/>
</dbReference>
<dbReference type="GO" id="GO:0042802">
    <property type="term" value="F:identical protein binding"/>
    <property type="evidence" value="ECO:0000266"/>
    <property type="project" value="RGD"/>
</dbReference>
<dbReference type="GO" id="GO:0031625">
    <property type="term" value="F:ubiquitin protein ligase binding"/>
    <property type="evidence" value="ECO:0000266"/>
    <property type="project" value="RGD"/>
</dbReference>
<dbReference type="GO" id="GO:0030154">
    <property type="term" value="P:cell differentiation"/>
    <property type="evidence" value="ECO:0007669"/>
    <property type="project" value="UniProtKB-KW"/>
</dbReference>
<dbReference type="GO" id="GO:0006302">
    <property type="term" value="P:double-strand break repair"/>
    <property type="evidence" value="ECO:0000266"/>
    <property type="project" value="RGD"/>
</dbReference>
<dbReference type="GO" id="GO:0007566">
    <property type="term" value="P:embryo implantation"/>
    <property type="evidence" value="ECO:0000266"/>
    <property type="project" value="RGD"/>
</dbReference>
<dbReference type="GO" id="GO:0007276">
    <property type="term" value="P:gamete generation"/>
    <property type="evidence" value="ECO:0000266"/>
    <property type="project" value="RGD"/>
</dbReference>
<dbReference type="GO" id="GO:0008104">
    <property type="term" value="P:protein localization"/>
    <property type="evidence" value="ECO:0000266"/>
    <property type="project" value="RGD"/>
</dbReference>
<dbReference type="GO" id="GO:0007283">
    <property type="term" value="P:spermatogenesis"/>
    <property type="evidence" value="ECO:0007669"/>
    <property type="project" value="UniProtKB-KW"/>
</dbReference>
<dbReference type="InterPro" id="IPR031400">
    <property type="entry name" value="GGN"/>
</dbReference>
<dbReference type="PANTHER" id="PTHR47742">
    <property type="entry name" value="GAMETOGENETIN"/>
    <property type="match status" value="1"/>
</dbReference>
<dbReference type="PANTHER" id="PTHR47742:SF1">
    <property type="entry name" value="GAMETOGENETIN"/>
    <property type="match status" value="1"/>
</dbReference>
<dbReference type="Pfam" id="PF15685">
    <property type="entry name" value="GGN"/>
    <property type="match status" value="1"/>
</dbReference>
<reference key="1">
    <citation type="journal article" date="2004" name="Genome Res.">
        <title>The status, quality, and expansion of the NIH full-length cDNA project: the Mammalian Gene Collection (MGC).</title>
        <authorList>
            <consortium name="The MGC Project Team"/>
        </authorList>
    </citation>
    <scope>NUCLEOTIDE SEQUENCE [LARGE SCALE MRNA]</scope>
    <source>
        <tissue>Testis</tissue>
    </source>
</reference>
<reference key="2">
    <citation type="journal article" date="2012" name="Nat. Commun.">
        <title>Quantitative maps of protein phosphorylation sites across 14 different rat organs and tissues.</title>
        <authorList>
            <person name="Lundby A."/>
            <person name="Secher A."/>
            <person name="Lage K."/>
            <person name="Nordsborg N.B."/>
            <person name="Dmytriyev A."/>
            <person name="Lundby C."/>
            <person name="Olsen J.V."/>
        </authorList>
    </citation>
    <scope>PHOSPHORYLATION [LARGE SCALE ANALYSIS] AT SER-384</scope>
    <scope>IDENTIFICATION BY MASS SPECTROMETRY [LARGE SCALE ANALYSIS]</scope>
</reference>
<gene>
    <name type="primary">Ggn</name>
</gene>
<feature type="chain" id="PRO_0000239344" description="Gametogenetin">
    <location>
        <begin position="1"/>
        <end position="658"/>
    </location>
</feature>
<feature type="region of interest" description="Disordered" evidence="2">
    <location>
        <begin position="1"/>
        <end position="268"/>
    </location>
</feature>
<feature type="region of interest" description="Interaction with GGNBP1" evidence="1">
    <location>
        <begin position="127"/>
        <end position="491"/>
    </location>
</feature>
<feature type="region of interest" description="Disordered" evidence="2">
    <location>
        <begin position="285"/>
        <end position="584"/>
    </location>
</feature>
<feature type="region of interest" description="Interactions with ZNF403/GGNBP2 and OAZ3" evidence="1">
    <location>
        <begin position="496"/>
        <end position="658"/>
    </location>
</feature>
<feature type="compositionally biased region" description="Basic and acidic residues" evidence="2">
    <location>
        <begin position="14"/>
        <end position="30"/>
    </location>
</feature>
<feature type="compositionally biased region" description="Low complexity" evidence="2">
    <location>
        <begin position="54"/>
        <end position="83"/>
    </location>
</feature>
<feature type="compositionally biased region" description="Pro residues" evidence="2">
    <location>
        <begin position="163"/>
        <end position="188"/>
    </location>
</feature>
<feature type="compositionally biased region" description="Polar residues" evidence="2">
    <location>
        <begin position="194"/>
        <end position="204"/>
    </location>
</feature>
<feature type="compositionally biased region" description="Low complexity" evidence="2">
    <location>
        <begin position="252"/>
        <end position="264"/>
    </location>
</feature>
<feature type="compositionally biased region" description="Low complexity" evidence="2">
    <location>
        <begin position="398"/>
        <end position="409"/>
    </location>
</feature>
<feature type="compositionally biased region" description="Pro residues" evidence="2">
    <location>
        <begin position="423"/>
        <end position="460"/>
    </location>
</feature>
<feature type="compositionally biased region" description="Low complexity" evidence="2">
    <location>
        <begin position="489"/>
        <end position="516"/>
    </location>
</feature>
<feature type="compositionally biased region" description="Basic residues" evidence="2">
    <location>
        <begin position="527"/>
        <end position="536"/>
    </location>
</feature>
<feature type="modified residue" description="Phosphoserine" evidence="3">
    <location>
        <position position="384"/>
    </location>
</feature>
<protein>
    <recommendedName>
        <fullName>Gametogenetin</fullName>
    </recommendedName>
</protein>
<accession>Q66HC8</accession>
<name>GGN_RAT</name>